<comment type="function">
    <text evidence="1">Catalyzes the oxidation of either pyridoxine 5'-phosphate (PNP) or pyridoxamine 5'-phosphate (PMP) into pyridoxal 5'-phosphate (PLP).</text>
</comment>
<comment type="catalytic activity">
    <reaction evidence="1">
        <text>pyridoxamine 5'-phosphate + O2 + H2O = pyridoxal 5'-phosphate + H2O2 + NH4(+)</text>
        <dbReference type="Rhea" id="RHEA:15817"/>
        <dbReference type="ChEBI" id="CHEBI:15377"/>
        <dbReference type="ChEBI" id="CHEBI:15379"/>
        <dbReference type="ChEBI" id="CHEBI:16240"/>
        <dbReference type="ChEBI" id="CHEBI:28938"/>
        <dbReference type="ChEBI" id="CHEBI:58451"/>
        <dbReference type="ChEBI" id="CHEBI:597326"/>
        <dbReference type="EC" id="1.4.3.5"/>
    </reaction>
</comment>
<comment type="catalytic activity">
    <reaction evidence="1">
        <text>pyridoxine 5'-phosphate + O2 = pyridoxal 5'-phosphate + H2O2</text>
        <dbReference type="Rhea" id="RHEA:15149"/>
        <dbReference type="ChEBI" id="CHEBI:15379"/>
        <dbReference type="ChEBI" id="CHEBI:16240"/>
        <dbReference type="ChEBI" id="CHEBI:58589"/>
        <dbReference type="ChEBI" id="CHEBI:597326"/>
        <dbReference type="EC" id="1.4.3.5"/>
    </reaction>
</comment>
<comment type="cofactor">
    <cofactor evidence="1">
        <name>FMN</name>
        <dbReference type="ChEBI" id="CHEBI:58210"/>
    </cofactor>
    <text evidence="1">Binds 1 FMN per subunit.</text>
</comment>
<comment type="pathway">
    <text evidence="1">Cofactor metabolism; pyridoxal 5'-phosphate salvage; pyridoxal 5'-phosphate from pyridoxamine 5'-phosphate: step 1/1.</text>
</comment>
<comment type="pathway">
    <text evidence="1">Cofactor metabolism; pyridoxal 5'-phosphate salvage; pyridoxal 5'-phosphate from pyridoxine 5'-phosphate: step 1/1.</text>
</comment>
<comment type="subunit">
    <text evidence="1">Homodimer.</text>
</comment>
<comment type="similarity">
    <text evidence="1">Belongs to the pyridoxamine 5'-phosphate oxidase family.</text>
</comment>
<organism>
    <name type="scientific">Escherichia coli O81 (strain ED1a)</name>
    <dbReference type="NCBI Taxonomy" id="585397"/>
    <lineage>
        <taxon>Bacteria</taxon>
        <taxon>Pseudomonadati</taxon>
        <taxon>Pseudomonadota</taxon>
        <taxon>Gammaproteobacteria</taxon>
        <taxon>Enterobacterales</taxon>
        <taxon>Enterobacteriaceae</taxon>
        <taxon>Escherichia</taxon>
    </lineage>
</organism>
<feature type="chain" id="PRO_1000186309" description="Pyridoxine/pyridoxamine 5'-phosphate oxidase">
    <location>
        <begin position="1"/>
        <end position="218"/>
    </location>
</feature>
<feature type="binding site" evidence="1">
    <location>
        <begin position="14"/>
        <end position="17"/>
    </location>
    <ligand>
        <name>substrate</name>
    </ligand>
</feature>
<feature type="binding site" evidence="1">
    <location>
        <begin position="67"/>
        <end position="72"/>
    </location>
    <ligand>
        <name>FMN</name>
        <dbReference type="ChEBI" id="CHEBI:58210"/>
    </ligand>
</feature>
<feature type="binding site" evidence="1">
    <location>
        <position position="72"/>
    </location>
    <ligand>
        <name>substrate</name>
    </ligand>
</feature>
<feature type="binding site" evidence="1">
    <location>
        <begin position="82"/>
        <end position="83"/>
    </location>
    <ligand>
        <name>FMN</name>
        <dbReference type="ChEBI" id="CHEBI:58210"/>
    </ligand>
</feature>
<feature type="binding site" evidence="1">
    <location>
        <position position="88"/>
    </location>
    <ligand>
        <name>FMN</name>
        <dbReference type="ChEBI" id="CHEBI:58210"/>
    </ligand>
</feature>
<feature type="binding site" evidence="1">
    <location>
        <position position="89"/>
    </location>
    <ligand>
        <name>FMN</name>
        <dbReference type="ChEBI" id="CHEBI:58210"/>
    </ligand>
</feature>
<feature type="binding site" evidence="1">
    <location>
        <position position="111"/>
    </location>
    <ligand>
        <name>FMN</name>
        <dbReference type="ChEBI" id="CHEBI:58210"/>
    </ligand>
</feature>
<feature type="binding site" evidence="1">
    <location>
        <position position="129"/>
    </location>
    <ligand>
        <name>substrate</name>
    </ligand>
</feature>
<feature type="binding site" evidence="1">
    <location>
        <position position="133"/>
    </location>
    <ligand>
        <name>substrate</name>
    </ligand>
</feature>
<feature type="binding site" evidence="1">
    <location>
        <position position="137"/>
    </location>
    <ligand>
        <name>substrate</name>
    </ligand>
</feature>
<feature type="binding site" evidence="1">
    <location>
        <begin position="146"/>
        <end position="147"/>
    </location>
    <ligand>
        <name>FMN</name>
        <dbReference type="ChEBI" id="CHEBI:58210"/>
    </ligand>
</feature>
<feature type="binding site" evidence="1">
    <location>
        <position position="191"/>
    </location>
    <ligand>
        <name>FMN</name>
        <dbReference type="ChEBI" id="CHEBI:58210"/>
    </ligand>
</feature>
<feature type="binding site" evidence="1">
    <location>
        <begin position="197"/>
        <end position="199"/>
    </location>
    <ligand>
        <name>substrate</name>
    </ligand>
</feature>
<feature type="binding site" evidence="1">
    <location>
        <position position="201"/>
    </location>
    <ligand>
        <name>FMN</name>
        <dbReference type="ChEBI" id="CHEBI:58210"/>
    </ligand>
</feature>
<name>PDXH_ECO81</name>
<dbReference type="EC" id="1.4.3.5" evidence="1"/>
<dbReference type="EMBL" id="CU928162">
    <property type="protein sequence ID" value="CAR08032.2"/>
    <property type="molecule type" value="Genomic_DNA"/>
</dbReference>
<dbReference type="RefSeq" id="WP_001282316.1">
    <property type="nucleotide sequence ID" value="NC_011745.1"/>
</dbReference>
<dbReference type="SMR" id="B7MVB6"/>
<dbReference type="KEGG" id="ecq:ECED1_1839"/>
<dbReference type="HOGENOM" id="CLU_032263_2_2_6"/>
<dbReference type="UniPathway" id="UPA01068">
    <property type="reaction ID" value="UER00304"/>
</dbReference>
<dbReference type="UniPathway" id="UPA01068">
    <property type="reaction ID" value="UER00305"/>
</dbReference>
<dbReference type="Proteomes" id="UP000000748">
    <property type="component" value="Chromosome"/>
</dbReference>
<dbReference type="GO" id="GO:0010181">
    <property type="term" value="F:FMN binding"/>
    <property type="evidence" value="ECO:0007669"/>
    <property type="project" value="UniProtKB-UniRule"/>
</dbReference>
<dbReference type="GO" id="GO:0004733">
    <property type="term" value="F:pyridoxamine phosphate oxidase activity"/>
    <property type="evidence" value="ECO:0007669"/>
    <property type="project" value="UniProtKB-UniRule"/>
</dbReference>
<dbReference type="GO" id="GO:0008615">
    <property type="term" value="P:pyridoxine biosynthetic process"/>
    <property type="evidence" value="ECO:0007669"/>
    <property type="project" value="UniProtKB-KW"/>
</dbReference>
<dbReference type="FunFam" id="2.30.110.10:FF:000001">
    <property type="entry name" value="Pyridoxine/pyridoxamine 5'-phosphate oxidase"/>
    <property type="match status" value="1"/>
</dbReference>
<dbReference type="Gene3D" id="2.30.110.10">
    <property type="entry name" value="Electron Transport, Fmn-binding Protein, Chain A"/>
    <property type="match status" value="1"/>
</dbReference>
<dbReference type="HAMAP" id="MF_01629">
    <property type="entry name" value="PdxH"/>
    <property type="match status" value="1"/>
</dbReference>
<dbReference type="InterPro" id="IPR000659">
    <property type="entry name" value="Pyridox_Oxase"/>
</dbReference>
<dbReference type="InterPro" id="IPR019740">
    <property type="entry name" value="Pyridox_Oxase_CS"/>
</dbReference>
<dbReference type="InterPro" id="IPR011576">
    <property type="entry name" value="Pyridox_Oxase_N"/>
</dbReference>
<dbReference type="InterPro" id="IPR019576">
    <property type="entry name" value="Pyridoxamine_oxidase_dimer_C"/>
</dbReference>
<dbReference type="InterPro" id="IPR012349">
    <property type="entry name" value="Split_barrel_FMN-bd"/>
</dbReference>
<dbReference type="NCBIfam" id="TIGR00558">
    <property type="entry name" value="pdxH"/>
    <property type="match status" value="1"/>
</dbReference>
<dbReference type="NCBIfam" id="NF004231">
    <property type="entry name" value="PRK05679.1"/>
    <property type="match status" value="1"/>
</dbReference>
<dbReference type="PANTHER" id="PTHR10851:SF0">
    <property type="entry name" value="PYRIDOXINE-5'-PHOSPHATE OXIDASE"/>
    <property type="match status" value="1"/>
</dbReference>
<dbReference type="PANTHER" id="PTHR10851">
    <property type="entry name" value="PYRIDOXINE-5-PHOSPHATE OXIDASE"/>
    <property type="match status" value="1"/>
</dbReference>
<dbReference type="Pfam" id="PF10590">
    <property type="entry name" value="PNP_phzG_C"/>
    <property type="match status" value="1"/>
</dbReference>
<dbReference type="Pfam" id="PF01243">
    <property type="entry name" value="PNPOx_N"/>
    <property type="match status" value="1"/>
</dbReference>
<dbReference type="PIRSF" id="PIRSF000190">
    <property type="entry name" value="Pyd_amn-ph_oxd"/>
    <property type="match status" value="1"/>
</dbReference>
<dbReference type="SUPFAM" id="SSF50475">
    <property type="entry name" value="FMN-binding split barrel"/>
    <property type="match status" value="1"/>
</dbReference>
<dbReference type="PROSITE" id="PS01064">
    <property type="entry name" value="PYRIDOX_OXIDASE"/>
    <property type="match status" value="1"/>
</dbReference>
<evidence type="ECO:0000255" key="1">
    <source>
        <dbReference type="HAMAP-Rule" id="MF_01629"/>
    </source>
</evidence>
<proteinExistence type="inferred from homology"/>
<reference key="1">
    <citation type="journal article" date="2009" name="PLoS Genet.">
        <title>Organised genome dynamics in the Escherichia coli species results in highly diverse adaptive paths.</title>
        <authorList>
            <person name="Touchon M."/>
            <person name="Hoede C."/>
            <person name="Tenaillon O."/>
            <person name="Barbe V."/>
            <person name="Baeriswyl S."/>
            <person name="Bidet P."/>
            <person name="Bingen E."/>
            <person name="Bonacorsi S."/>
            <person name="Bouchier C."/>
            <person name="Bouvet O."/>
            <person name="Calteau A."/>
            <person name="Chiapello H."/>
            <person name="Clermont O."/>
            <person name="Cruveiller S."/>
            <person name="Danchin A."/>
            <person name="Diard M."/>
            <person name="Dossat C."/>
            <person name="Karoui M.E."/>
            <person name="Frapy E."/>
            <person name="Garry L."/>
            <person name="Ghigo J.M."/>
            <person name="Gilles A.M."/>
            <person name="Johnson J."/>
            <person name="Le Bouguenec C."/>
            <person name="Lescat M."/>
            <person name="Mangenot S."/>
            <person name="Martinez-Jehanne V."/>
            <person name="Matic I."/>
            <person name="Nassif X."/>
            <person name="Oztas S."/>
            <person name="Petit M.A."/>
            <person name="Pichon C."/>
            <person name="Rouy Z."/>
            <person name="Ruf C.S."/>
            <person name="Schneider D."/>
            <person name="Tourret J."/>
            <person name="Vacherie B."/>
            <person name="Vallenet D."/>
            <person name="Medigue C."/>
            <person name="Rocha E.P.C."/>
            <person name="Denamur E."/>
        </authorList>
    </citation>
    <scope>NUCLEOTIDE SEQUENCE [LARGE SCALE GENOMIC DNA]</scope>
    <source>
        <strain>ED1a</strain>
    </source>
</reference>
<accession>B7MVB6</accession>
<protein>
    <recommendedName>
        <fullName evidence="1">Pyridoxine/pyridoxamine 5'-phosphate oxidase</fullName>
        <ecNumber evidence="1">1.4.3.5</ecNumber>
    </recommendedName>
    <alternativeName>
        <fullName evidence="1">PNP/PMP oxidase</fullName>
        <shortName evidence="1">PNPOx</shortName>
    </alternativeName>
    <alternativeName>
        <fullName evidence="1">Pyridoxal 5'-phosphate synthase</fullName>
    </alternativeName>
</protein>
<sequence length="218" mass="25603">MSDNDELQQIAHLRREYTKGGLRRRDLPADPLTLFERWLSQACEAKLADPTAMVVATVDEHDQPYQRIVLLKHYDEKGMVFYTNLGSRKAHQIENNPRVSLLFPWHTLERQVMVIGKAERLSTLEVMKYFHSRPRDSQIGAWVSKQSSRISARGILESKFLELKQKFQQGEVPLPSFWGGFRVSLEQIEFWQGGEHRLHDRFLYQRENDAWKIDRLAP</sequence>
<gene>
    <name evidence="1" type="primary">pdxH</name>
    <name type="ordered locus">ECED1_1839</name>
</gene>
<keyword id="KW-0285">Flavoprotein</keyword>
<keyword id="KW-0288">FMN</keyword>
<keyword id="KW-0560">Oxidoreductase</keyword>
<keyword id="KW-0664">Pyridoxine biosynthesis</keyword>